<evidence type="ECO:0000255" key="1"/>
<evidence type="ECO:0000305" key="2"/>
<name>Y1900_AQUAE</name>
<protein>
    <recommendedName>
        <fullName>Uncharacterized protein aq_1900</fullName>
    </recommendedName>
</protein>
<sequence>MKRIIALLFFFLIAFGYSLSPEEEKQLIRDIAEIKATLKTFMEQTDKRFQDLNQRINELREDMNKRFEQVDKRFEQVDKRFEQINNELNRLIQIMVGIFAGQIALVAAVIGFAWWDRRTIIRKSKEETFEEMEKELRPEKFKKLLNALREKAKTDKELEAILKKYGLL</sequence>
<reference key="1">
    <citation type="journal article" date="1998" name="Nature">
        <title>The complete genome of the hyperthermophilic bacterium Aquifex aeolicus.</title>
        <authorList>
            <person name="Deckert G."/>
            <person name="Warren P.V."/>
            <person name="Gaasterland T."/>
            <person name="Young W.G."/>
            <person name="Lenox A.L."/>
            <person name="Graham D.E."/>
            <person name="Overbeek R."/>
            <person name="Snead M.A."/>
            <person name="Keller M."/>
            <person name="Aujay M."/>
            <person name="Huber R."/>
            <person name="Feldman R.A."/>
            <person name="Short J.M."/>
            <person name="Olsen G.J."/>
            <person name="Swanson R.V."/>
        </authorList>
    </citation>
    <scope>NUCLEOTIDE SEQUENCE [LARGE SCALE GENOMIC DNA]</scope>
    <source>
        <strain>VF5</strain>
    </source>
</reference>
<keyword id="KW-1003">Cell membrane</keyword>
<keyword id="KW-0472">Membrane</keyword>
<keyword id="KW-1185">Reference proteome</keyword>
<keyword id="KW-0812">Transmembrane</keyword>
<keyword id="KW-1133">Transmembrane helix</keyword>
<comment type="subcellular location">
    <subcellularLocation>
        <location evidence="2">Cell membrane</location>
        <topology evidence="2">Multi-pass membrane protein</topology>
    </subcellularLocation>
</comment>
<comment type="similarity">
    <text evidence="2">To A.aeolicus aq_1446.</text>
</comment>
<organism>
    <name type="scientific">Aquifex aeolicus (strain VF5)</name>
    <dbReference type="NCBI Taxonomy" id="224324"/>
    <lineage>
        <taxon>Bacteria</taxon>
        <taxon>Pseudomonadati</taxon>
        <taxon>Aquificota</taxon>
        <taxon>Aquificia</taxon>
        <taxon>Aquificales</taxon>
        <taxon>Aquificaceae</taxon>
        <taxon>Aquifex</taxon>
    </lineage>
</organism>
<gene>
    <name type="ordered locus">aq_1900</name>
</gene>
<dbReference type="EMBL" id="AE000657">
    <property type="protein sequence ID" value="AAC07710.1"/>
    <property type="molecule type" value="Genomic_DNA"/>
</dbReference>
<dbReference type="RefSeq" id="NP_214306.1">
    <property type="nucleotide sequence ID" value="NC_000918.1"/>
</dbReference>
<dbReference type="RefSeq" id="WP_010881242.1">
    <property type="nucleotide sequence ID" value="NC_000918.1"/>
</dbReference>
<dbReference type="SMR" id="O67738"/>
<dbReference type="STRING" id="224324.aq_1899a"/>
<dbReference type="EnsemblBacteria" id="AAC07710">
    <property type="protein sequence ID" value="AAC07710"/>
    <property type="gene ID" value="aq_1899a"/>
</dbReference>
<dbReference type="KEGG" id="aae:aq_1899a"/>
<dbReference type="PATRIC" id="fig|224324.8.peg.1472"/>
<dbReference type="eggNOG" id="ENOG5032W39">
    <property type="taxonomic scope" value="Bacteria"/>
</dbReference>
<dbReference type="HOGENOM" id="CLU_1583165_0_0_0"/>
<dbReference type="InParanoid" id="O67738"/>
<dbReference type="OrthoDB" id="965621at2"/>
<dbReference type="Proteomes" id="UP000000798">
    <property type="component" value="Chromosome"/>
</dbReference>
<dbReference type="GO" id="GO:0005886">
    <property type="term" value="C:plasma membrane"/>
    <property type="evidence" value="ECO:0007669"/>
    <property type="project" value="UniProtKB-SubCell"/>
</dbReference>
<dbReference type="Gene3D" id="3.90.20.10">
    <property type="match status" value="1"/>
</dbReference>
<dbReference type="SUPFAM" id="SSF58064">
    <property type="entry name" value="Influenza hemagglutinin (stalk)"/>
    <property type="match status" value="1"/>
</dbReference>
<accession>O67738</accession>
<feature type="chain" id="PRO_0000186956" description="Uncharacterized protein aq_1900">
    <location>
        <begin position="1"/>
        <end position="168"/>
    </location>
</feature>
<feature type="transmembrane region" description="Helical" evidence="1">
    <location>
        <begin position="4"/>
        <end position="24"/>
    </location>
</feature>
<feature type="transmembrane region" description="Helical" evidence="1">
    <location>
        <begin position="94"/>
        <end position="114"/>
    </location>
</feature>
<proteinExistence type="predicted"/>